<keyword id="KW-0067">ATP-binding</keyword>
<keyword id="KW-0963">Cytoplasm</keyword>
<keyword id="KW-0227">DNA damage</keyword>
<keyword id="KW-0228">DNA excision</keyword>
<keyword id="KW-0234">DNA repair</keyword>
<keyword id="KW-0267">Excision nuclease</keyword>
<keyword id="KW-0347">Helicase</keyword>
<keyword id="KW-0378">Hydrolase</keyword>
<keyword id="KW-0547">Nucleotide-binding</keyword>
<keyword id="KW-0742">SOS response</keyword>
<accession>B1X7A9</accession>
<name>UVRB_ECODH</name>
<evidence type="ECO:0000255" key="1">
    <source>
        <dbReference type="HAMAP-Rule" id="MF_00204"/>
    </source>
</evidence>
<evidence type="ECO:0000256" key="2">
    <source>
        <dbReference type="SAM" id="MobiDB-lite"/>
    </source>
</evidence>
<reference key="1">
    <citation type="journal article" date="2008" name="J. Bacteriol.">
        <title>The complete genome sequence of Escherichia coli DH10B: insights into the biology of a laboratory workhorse.</title>
        <authorList>
            <person name="Durfee T."/>
            <person name="Nelson R."/>
            <person name="Baldwin S."/>
            <person name="Plunkett G. III"/>
            <person name="Burland V."/>
            <person name="Mau B."/>
            <person name="Petrosino J.F."/>
            <person name="Qin X."/>
            <person name="Muzny D.M."/>
            <person name="Ayele M."/>
            <person name="Gibbs R.A."/>
            <person name="Csorgo B."/>
            <person name="Posfai G."/>
            <person name="Weinstock G.M."/>
            <person name="Blattner F.R."/>
        </authorList>
    </citation>
    <scope>NUCLEOTIDE SEQUENCE [LARGE SCALE GENOMIC DNA]</scope>
    <source>
        <strain>K12 / DH10B</strain>
    </source>
</reference>
<sequence>MSKPFKLNSAFKPSGDQPEAIRRLEEGLEDGLAHQTLLGVTGSGKTFTIANVIADLQRPTMVLAPNKTLAAQLYGEMKEFFPENAVEYFVSYYDYYQPEAYVPSSDTFIEKDASVNEHIEQMRLSATKAMLERRDVVVVASVSAIYGLGDPDLYLKMMLHLTVGMIIDQRAILRRLAELQYARNDQAFQRGTFRVRGEVIDIFPAESDDIALRVELFDEEVERLSLFDPLTGQIVSTIPRFTIYPKTHYVTPRERIVQAMEEIKEELAARRKVLLENNKLLEEQRLTQRTQFDLEMMNELGYCSGIENYSRFLSGRGPGEPPPTLFDYLPADGLLVVDESHVTIPQIGGMYRGDRARKETLVEYGFRLPSALDNRPLKFEEFEALAPQTIYVSATPGNYELEKSGGDVVDQVVRPTGLLDPIIEVRPVATQVDDLLSEIRQRAAINERVLVTTLTKRMAEDLTEYLEEHGERVRYLHSDIDTVERMEIIRDLRLGEFDVLVGINLLREGLDMPEVSLVAILDADKEGFLRSERSLIQTIGRAARNVNGKAILYGDKITPSMAKAIGETERRREKQQKYNEEHGITPQGLNKKVVDILALGQNIAKTKAKGRGKSRPIVEPDNVPMDMSPKALQQKIHELEGLMMQHAQNLEFEEAAQIRDQLHQLRELFIAAS</sequence>
<gene>
    <name evidence="1" type="primary">uvrB</name>
    <name type="ordered locus">ECDH10B_0847</name>
</gene>
<dbReference type="EMBL" id="CP000948">
    <property type="protein sequence ID" value="ACB01980.1"/>
    <property type="molecule type" value="Genomic_DNA"/>
</dbReference>
<dbReference type="RefSeq" id="WP_000042533.1">
    <property type="nucleotide sequence ID" value="NC_010473.1"/>
</dbReference>
<dbReference type="SMR" id="B1X7A9"/>
<dbReference type="GeneID" id="93776651"/>
<dbReference type="KEGG" id="ecd:ECDH10B_0847"/>
<dbReference type="HOGENOM" id="CLU_009621_2_1_6"/>
<dbReference type="GO" id="GO:0005737">
    <property type="term" value="C:cytoplasm"/>
    <property type="evidence" value="ECO:0007669"/>
    <property type="project" value="UniProtKB-SubCell"/>
</dbReference>
<dbReference type="GO" id="GO:0009380">
    <property type="term" value="C:excinuclease repair complex"/>
    <property type="evidence" value="ECO:0007669"/>
    <property type="project" value="InterPro"/>
</dbReference>
<dbReference type="GO" id="GO:0005524">
    <property type="term" value="F:ATP binding"/>
    <property type="evidence" value="ECO:0007669"/>
    <property type="project" value="UniProtKB-UniRule"/>
</dbReference>
<dbReference type="GO" id="GO:0016887">
    <property type="term" value="F:ATP hydrolysis activity"/>
    <property type="evidence" value="ECO:0007669"/>
    <property type="project" value="InterPro"/>
</dbReference>
<dbReference type="GO" id="GO:0003677">
    <property type="term" value="F:DNA binding"/>
    <property type="evidence" value="ECO:0007669"/>
    <property type="project" value="UniProtKB-UniRule"/>
</dbReference>
<dbReference type="GO" id="GO:0009381">
    <property type="term" value="F:excinuclease ABC activity"/>
    <property type="evidence" value="ECO:0007669"/>
    <property type="project" value="UniProtKB-UniRule"/>
</dbReference>
<dbReference type="GO" id="GO:0004386">
    <property type="term" value="F:helicase activity"/>
    <property type="evidence" value="ECO:0007669"/>
    <property type="project" value="UniProtKB-KW"/>
</dbReference>
<dbReference type="GO" id="GO:0006289">
    <property type="term" value="P:nucleotide-excision repair"/>
    <property type="evidence" value="ECO:0007669"/>
    <property type="project" value="UniProtKB-UniRule"/>
</dbReference>
<dbReference type="GO" id="GO:0009432">
    <property type="term" value="P:SOS response"/>
    <property type="evidence" value="ECO:0007669"/>
    <property type="project" value="UniProtKB-UniRule"/>
</dbReference>
<dbReference type="CDD" id="cd17916">
    <property type="entry name" value="DEXHc_UvrB"/>
    <property type="match status" value="1"/>
</dbReference>
<dbReference type="CDD" id="cd18790">
    <property type="entry name" value="SF2_C_UvrB"/>
    <property type="match status" value="1"/>
</dbReference>
<dbReference type="FunFam" id="3.40.50.300:FF:000257">
    <property type="entry name" value="UvrABC system protein B"/>
    <property type="match status" value="1"/>
</dbReference>
<dbReference type="FunFam" id="3.40.50.300:FF:000401">
    <property type="entry name" value="UvrABC system protein B"/>
    <property type="match status" value="1"/>
</dbReference>
<dbReference type="FunFam" id="3.40.50.300:FF:000477">
    <property type="entry name" value="UvrABC system protein B"/>
    <property type="match status" value="1"/>
</dbReference>
<dbReference type="Gene3D" id="3.40.50.300">
    <property type="entry name" value="P-loop containing nucleotide triphosphate hydrolases"/>
    <property type="match status" value="3"/>
</dbReference>
<dbReference type="Gene3D" id="4.10.860.10">
    <property type="entry name" value="UVR domain"/>
    <property type="match status" value="1"/>
</dbReference>
<dbReference type="HAMAP" id="MF_00204">
    <property type="entry name" value="UvrB"/>
    <property type="match status" value="1"/>
</dbReference>
<dbReference type="InterPro" id="IPR006935">
    <property type="entry name" value="Helicase/UvrB_N"/>
</dbReference>
<dbReference type="InterPro" id="IPR014001">
    <property type="entry name" value="Helicase_ATP-bd"/>
</dbReference>
<dbReference type="InterPro" id="IPR001650">
    <property type="entry name" value="Helicase_C-like"/>
</dbReference>
<dbReference type="InterPro" id="IPR027417">
    <property type="entry name" value="P-loop_NTPase"/>
</dbReference>
<dbReference type="InterPro" id="IPR001943">
    <property type="entry name" value="UVR_dom"/>
</dbReference>
<dbReference type="InterPro" id="IPR036876">
    <property type="entry name" value="UVR_dom_sf"/>
</dbReference>
<dbReference type="InterPro" id="IPR004807">
    <property type="entry name" value="UvrB"/>
</dbReference>
<dbReference type="InterPro" id="IPR041471">
    <property type="entry name" value="UvrB_inter"/>
</dbReference>
<dbReference type="InterPro" id="IPR024759">
    <property type="entry name" value="UvrB_YAD/RRR_dom"/>
</dbReference>
<dbReference type="NCBIfam" id="NF003673">
    <property type="entry name" value="PRK05298.1"/>
    <property type="match status" value="1"/>
</dbReference>
<dbReference type="NCBIfam" id="TIGR00631">
    <property type="entry name" value="uvrb"/>
    <property type="match status" value="1"/>
</dbReference>
<dbReference type="PANTHER" id="PTHR24029">
    <property type="entry name" value="UVRABC SYSTEM PROTEIN B"/>
    <property type="match status" value="1"/>
</dbReference>
<dbReference type="PANTHER" id="PTHR24029:SF0">
    <property type="entry name" value="UVRABC SYSTEM PROTEIN B"/>
    <property type="match status" value="1"/>
</dbReference>
<dbReference type="Pfam" id="PF00271">
    <property type="entry name" value="Helicase_C"/>
    <property type="match status" value="1"/>
</dbReference>
<dbReference type="Pfam" id="PF04851">
    <property type="entry name" value="ResIII"/>
    <property type="match status" value="1"/>
</dbReference>
<dbReference type="Pfam" id="PF02151">
    <property type="entry name" value="UVR"/>
    <property type="match status" value="1"/>
</dbReference>
<dbReference type="Pfam" id="PF12344">
    <property type="entry name" value="UvrB"/>
    <property type="match status" value="1"/>
</dbReference>
<dbReference type="Pfam" id="PF17757">
    <property type="entry name" value="UvrB_inter"/>
    <property type="match status" value="1"/>
</dbReference>
<dbReference type="SMART" id="SM00487">
    <property type="entry name" value="DEXDc"/>
    <property type="match status" value="1"/>
</dbReference>
<dbReference type="SMART" id="SM00490">
    <property type="entry name" value="HELICc"/>
    <property type="match status" value="1"/>
</dbReference>
<dbReference type="SUPFAM" id="SSF46600">
    <property type="entry name" value="C-terminal UvrC-binding domain of UvrB"/>
    <property type="match status" value="1"/>
</dbReference>
<dbReference type="SUPFAM" id="SSF52540">
    <property type="entry name" value="P-loop containing nucleoside triphosphate hydrolases"/>
    <property type="match status" value="2"/>
</dbReference>
<dbReference type="PROSITE" id="PS51192">
    <property type="entry name" value="HELICASE_ATP_BIND_1"/>
    <property type="match status" value="1"/>
</dbReference>
<dbReference type="PROSITE" id="PS51194">
    <property type="entry name" value="HELICASE_CTER"/>
    <property type="match status" value="1"/>
</dbReference>
<dbReference type="PROSITE" id="PS50151">
    <property type="entry name" value="UVR"/>
    <property type="match status" value="1"/>
</dbReference>
<organism>
    <name type="scientific">Escherichia coli (strain K12 / DH10B)</name>
    <dbReference type="NCBI Taxonomy" id="316385"/>
    <lineage>
        <taxon>Bacteria</taxon>
        <taxon>Pseudomonadati</taxon>
        <taxon>Pseudomonadota</taxon>
        <taxon>Gammaproteobacteria</taxon>
        <taxon>Enterobacterales</taxon>
        <taxon>Enterobacteriaceae</taxon>
        <taxon>Escherichia</taxon>
    </lineage>
</organism>
<proteinExistence type="inferred from homology"/>
<feature type="chain" id="PRO_1000099549" description="UvrABC system protein B">
    <location>
        <begin position="1"/>
        <end position="673"/>
    </location>
</feature>
<feature type="domain" description="Helicase ATP-binding" evidence="1">
    <location>
        <begin position="26"/>
        <end position="183"/>
    </location>
</feature>
<feature type="domain" description="Helicase C-terminal" evidence="1">
    <location>
        <begin position="431"/>
        <end position="597"/>
    </location>
</feature>
<feature type="domain" description="UVR" evidence="1">
    <location>
        <begin position="633"/>
        <end position="668"/>
    </location>
</feature>
<feature type="region of interest" description="Disordered" evidence="2">
    <location>
        <begin position="608"/>
        <end position="627"/>
    </location>
</feature>
<feature type="short sequence motif" description="Beta-hairpin">
    <location>
        <begin position="92"/>
        <end position="115"/>
    </location>
</feature>
<feature type="binding site" evidence="1">
    <location>
        <begin position="39"/>
        <end position="46"/>
    </location>
    <ligand>
        <name>ATP</name>
        <dbReference type="ChEBI" id="CHEBI:30616"/>
    </ligand>
</feature>
<protein>
    <recommendedName>
        <fullName evidence="1">UvrABC system protein B</fullName>
        <shortName evidence="1">Protein UvrB</shortName>
    </recommendedName>
    <alternativeName>
        <fullName evidence="1">Excinuclease ABC subunit B</fullName>
    </alternativeName>
</protein>
<comment type="function">
    <text evidence="1">The UvrABC repair system catalyzes the recognition and processing of DNA lesions. A damage recognition complex composed of 2 UvrA and 2 UvrB subunits scans DNA for abnormalities. Upon binding of the UvrA(2)B(2) complex to a putative damaged site, the DNA wraps around one UvrB monomer. DNA wrap is dependent on ATP binding by UvrB and probably causes local melting of the DNA helix, facilitating insertion of UvrB beta-hairpin between the DNA strands. Then UvrB probes one DNA strand for the presence of a lesion. If a lesion is found the UvrA subunits dissociate and the UvrB-DNA preincision complex is formed. This complex is subsequently bound by UvrC and the second UvrB is released. If no lesion is found, the DNA wraps around the other UvrB subunit that will check the other stand for damage.</text>
</comment>
<comment type="subunit">
    <text evidence="1">Forms a heterotetramer with UvrA during the search for lesions. Interacts with UvrC in an incision complex.</text>
</comment>
<comment type="subcellular location">
    <subcellularLocation>
        <location evidence="1">Cytoplasm</location>
    </subcellularLocation>
</comment>
<comment type="domain">
    <text evidence="1">The beta-hairpin motif is involved in DNA binding.</text>
</comment>
<comment type="similarity">
    <text evidence="1">Belongs to the UvrB family.</text>
</comment>